<protein>
    <recommendedName>
        <fullName evidence="3">Aquaporin Lacbi1:247946</fullName>
    </recommendedName>
</protein>
<organism>
    <name type="scientific">Laccaria bicolor (strain S238N-H82 / ATCC MYA-4686)</name>
    <name type="common">Bicoloured deceiver</name>
    <name type="synonym">Laccaria laccata var. bicolor</name>
    <dbReference type="NCBI Taxonomy" id="486041"/>
    <lineage>
        <taxon>Eukaryota</taxon>
        <taxon>Fungi</taxon>
        <taxon>Dikarya</taxon>
        <taxon>Basidiomycota</taxon>
        <taxon>Agaricomycotina</taxon>
        <taxon>Agaricomycetes</taxon>
        <taxon>Agaricomycetidae</taxon>
        <taxon>Agaricales</taxon>
        <taxon>Agaricineae</taxon>
        <taxon>Hydnangiaceae</taxon>
        <taxon>Laccaria</taxon>
    </lineage>
</organism>
<sequence>MKLTISHHKCAIRKVMAEFVGVALLVIFGAGTACQVVLSTNPSSFLSINFGWAIGIATGAWVSAGISGGHINPAITIAMATYRGFPWREVPGYIFAQALGGFVGAALVYANYFHAIDIFEGGHIRTQATASLFATFALPYMTQASCFFSEFLATAVLFIVFLALNDKHNGALTNGLLPFALFILFIGLGASLGMQTGYAVNPARDFGPRLFLAMAGYGKAVFNYRRQYWIWAPIIAPILGAQAGGLLYDTSIYNGDDSPIKWR</sequence>
<dbReference type="EMBL" id="DS547097">
    <property type="protein sequence ID" value="EDR10549.1"/>
    <property type="molecule type" value="Genomic_DNA"/>
</dbReference>
<dbReference type="RefSeq" id="XP_001878999.1">
    <property type="nucleotide sequence ID" value="XM_001878964.1"/>
</dbReference>
<dbReference type="SMR" id="B0D4E4"/>
<dbReference type="FunCoup" id="B0D4E4">
    <property type="interactions" value="60"/>
</dbReference>
<dbReference type="STRING" id="486041.B0D4E4"/>
<dbReference type="GeneID" id="6074470"/>
<dbReference type="KEGG" id="lbc:LACBIDRAFT_247946"/>
<dbReference type="HOGENOM" id="CLU_020019_9_0_1"/>
<dbReference type="InParanoid" id="B0D4E4"/>
<dbReference type="OrthoDB" id="3222at2759"/>
<dbReference type="Proteomes" id="UP000001194">
    <property type="component" value="Unassembled WGS sequence"/>
</dbReference>
<dbReference type="GO" id="GO:0005886">
    <property type="term" value="C:plasma membrane"/>
    <property type="evidence" value="ECO:0007669"/>
    <property type="project" value="TreeGrafter"/>
</dbReference>
<dbReference type="GO" id="GO:0015254">
    <property type="term" value="F:glycerol channel activity"/>
    <property type="evidence" value="ECO:0007669"/>
    <property type="project" value="TreeGrafter"/>
</dbReference>
<dbReference type="GO" id="GO:0015250">
    <property type="term" value="F:water channel activity"/>
    <property type="evidence" value="ECO:0007669"/>
    <property type="project" value="TreeGrafter"/>
</dbReference>
<dbReference type="CDD" id="cd00333">
    <property type="entry name" value="MIP"/>
    <property type="match status" value="1"/>
</dbReference>
<dbReference type="Gene3D" id="1.20.1080.10">
    <property type="entry name" value="Glycerol uptake facilitator protein"/>
    <property type="match status" value="1"/>
</dbReference>
<dbReference type="InterPro" id="IPR023271">
    <property type="entry name" value="Aquaporin-like"/>
</dbReference>
<dbReference type="InterPro" id="IPR000425">
    <property type="entry name" value="MIP"/>
</dbReference>
<dbReference type="InterPro" id="IPR050363">
    <property type="entry name" value="MIP/Aquaporin"/>
</dbReference>
<dbReference type="InterPro" id="IPR022357">
    <property type="entry name" value="MIP_CS"/>
</dbReference>
<dbReference type="NCBIfam" id="TIGR00861">
    <property type="entry name" value="MIP"/>
    <property type="match status" value="1"/>
</dbReference>
<dbReference type="PANTHER" id="PTHR43829">
    <property type="entry name" value="AQUAPORIN OR AQUAGLYCEROPORIN RELATED"/>
    <property type="match status" value="1"/>
</dbReference>
<dbReference type="PANTHER" id="PTHR43829:SF9">
    <property type="entry name" value="AQUAPORIN-9"/>
    <property type="match status" value="1"/>
</dbReference>
<dbReference type="Pfam" id="PF00230">
    <property type="entry name" value="MIP"/>
    <property type="match status" value="1"/>
</dbReference>
<dbReference type="PRINTS" id="PR00783">
    <property type="entry name" value="MINTRINSICP"/>
</dbReference>
<dbReference type="SUPFAM" id="SSF81338">
    <property type="entry name" value="Aquaporin-like"/>
    <property type="match status" value="1"/>
</dbReference>
<dbReference type="PROSITE" id="PS00221">
    <property type="entry name" value="MIP"/>
    <property type="match status" value="1"/>
</dbReference>
<gene>
    <name type="ORF">Lacbi1:247946</name>
    <name type="ORF">LACBIDRAFT_247946</name>
</gene>
<name>AQP5_LACBS</name>
<keyword id="KW-0472">Membrane</keyword>
<keyword id="KW-1185">Reference proteome</keyword>
<keyword id="KW-0677">Repeat</keyword>
<keyword id="KW-0812">Transmembrane</keyword>
<keyword id="KW-1133">Transmembrane helix</keyword>
<keyword id="KW-0813">Transport</keyword>
<feature type="chain" id="PRO_0000457456" description="Aquaporin Lacbi1:247946">
    <location>
        <begin position="1"/>
        <end position="263"/>
    </location>
</feature>
<feature type="topological domain" description="Cytoplasmic" evidence="5">
    <location>
        <begin position="1"/>
        <end position="18"/>
    </location>
</feature>
<feature type="transmembrane region" description="Helical" evidence="1">
    <location>
        <begin position="19"/>
        <end position="39"/>
    </location>
</feature>
<feature type="topological domain" description="Extracellular" evidence="5">
    <location>
        <begin position="40"/>
        <end position="45"/>
    </location>
</feature>
<feature type="transmembrane region" description="Helical" evidence="1">
    <location>
        <begin position="46"/>
        <end position="66"/>
    </location>
</feature>
<feature type="topological domain" description="Cytoplasmic" evidence="5">
    <location>
        <begin position="67"/>
        <end position="89"/>
    </location>
</feature>
<feature type="transmembrane region" description="Helical" evidence="1">
    <location>
        <begin position="90"/>
        <end position="110"/>
    </location>
</feature>
<feature type="topological domain" description="Extracellular" evidence="5">
    <location>
        <begin position="111"/>
        <end position="143"/>
    </location>
</feature>
<feature type="transmembrane region" description="Helical" evidence="1">
    <location>
        <begin position="144"/>
        <end position="164"/>
    </location>
</feature>
<feature type="topological domain" description="Cytoplasmic" evidence="5">
    <location>
        <begin position="165"/>
        <end position="169"/>
    </location>
</feature>
<feature type="transmembrane region" description="Helical" evidence="1">
    <location>
        <begin position="170"/>
        <end position="190"/>
    </location>
</feature>
<feature type="topological domain" description="Extracellular" evidence="5">
    <location>
        <begin position="191"/>
        <end position="227"/>
    </location>
</feature>
<feature type="transmembrane region" description="Helical" evidence="1">
    <location>
        <begin position="228"/>
        <end position="248"/>
    </location>
</feature>
<feature type="topological domain" description="Cytoplasmic" evidence="5">
    <location>
        <begin position="249"/>
        <end position="263"/>
    </location>
</feature>
<feature type="short sequence motif" description="NPA 1" evidence="5">
    <location>
        <begin position="72"/>
        <end position="74"/>
    </location>
</feature>
<feature type="short sequence motif" description="NPA 2" evidence="5">
    <location>
        <begin position="201"/>
        <end position="203"/>
    </location>
</feature>
<proteinExistence type="evidence at protein level"/>
<evidence type="ECO:0000255" key="1"/>
<evidence type="ECO:0000269" key="2">
    <source>
    </source>
</evidence>
<evidence type="ECO:0000303" key="3">
    <source>
    </source>
</evidence>
<evidence type="ECO:0000305" key="4"/>
<evidence type="ECO:0000305" key="5">
    <source>
    </source>
</evidence>
<reference key="1">
    <citation type="journal article" date="2008" name="Nature">
        <title>The genome of Laccaria bicolor provides insights into mycorrhizal symbiosis.</title>
        <authorList>
            <person name="Martin F."/>
            <person name="Aerts A."/>
            <person name="Ahren D."/>
            <person name="Brun A."/>
            <person name="Danchin E.G.J."/>
            <person name="Duchaussoy F."/>
            <person name="Gibon J."/>
            <person name="Kohler A."/>
            <person name="Lindquist E."/>
            <person name="Pereda V."/>
            <person name="Salamov A."/>
            <person name="Shapiro H.J."/>
            <person name="Wuyts J."/>
            <person name="Blaudez D."/>
            <person name="Buee M."/>
            <person name="Brokstein P."/>
            <person name="Canbaeck B."/>
            <person name="Cohen D."/>
            <person name="Courty P.E."/>
            <person name="Coutinho P.M."/>
            <person name="Delaruelle C."/>
            <person name="Detter J.C."/>
            <person name="Deveau A."/>
            <person name="DiFazio S."/>
            <person name="Duplessis S."/>
            <person name="Fraissinet-Tachet L."/>
            <person name="Lucic E."/>
            <person name="Frey-Klett P."/>
            <person name="Fourrey C."/>
            <person name="Feussner I."/>
            <person name="Gay G."/>
            <person name="Grimwood J."/>
            <person name="Hoegger P.J."/>
            <person name="Jain P."/>
            <person name="Kilaru S."/>
            <person name="Labbe J."/>
            <person name="Lin Y.C."/>
            <person name="Legue V."/>
            <person name="Le Tacon F."/>
            <person name="Marmeisse R."/>
            <person name="Melayah D."/>
            <person name="Montanini B."/>
            <person name="Muratet M."/>
            <person name="Nehls U."/>
            <person name="Niculita-Hirzel H."/>
            <person name="Oudot-Le Secq M.P."/>
            <person name="Peter M."/>
            <person name="Quesneville H."/>
            <person name="Rajashekar B."/>
            <person name="Reich M."/>
            <person name="Rouhier N."/>
            <person name="Schmutz J."/>
            <person name="Yin T."/>
            <person name="Chalot M."/>
            <person name="Henrissat B."/>
            <person name="Kuees U."/>
            <person name="Lucas S."/>
            <person name="Van de Peer Y."/>
            <person name="Podila G.K."/>
            <person name="Polle A."/>
            <person name="Pukkila P.J."/>
            <person name="Richardson P.M."/>
            <person name="Rouze P."/>
            <person name="Sanders I.R."/>
            <person name="Stajich J.E."/>
            <person name="Tunlid A."/>
            <person name="Tuskan G."/>
            <person name="Grigoriev I.V."/>
        </authorList>
    </citation>
    <scope>NUCLEOTIDE SEQUENCE [LARGE SCALE GENOMIC DNA]</scope>
    <source>
        <strain>S238N-H82 / ATCC MYA-4686</strain>
    </source>
</reference>
<reference key="2">
    <citation type="journal article" date="2011" name="New Phytol.">
        <title>The aquaporin gene family of the ectomycorrhizal fungus Laccaria bicolor: lessons for symbiotic functions.</title>
        <authorList>
            <person name="Dietz S."/>
            <person name="von Buelow J."/>
            <person name="Beitz E."/>
            <person name="Nehls U."/>
        </authorList>
    </citation>
    <scope>FUNCTION</scope>
    <scope>DOMAIN</scope>
    <scope>TOPOLOGY</scope>
    <scope>TRANSPORTER ACTIVITY</scope>
    <scope>INDUCTION</scope>
</reference>
<accession>B0D4E4</accession>
<comment type="function">
    <text evidence="2">Water channel required to facilitate the transport of water across membranes (PubMed:21352231). Shows low but significant water conductivity, but no glycerol nor ammonium transport activities (PubMed:21352231).</text>
</comment>
<comment type="catalytic activity">
    <reaction evidence="2">
        <text>H2O(in) = H2O(out)</text>
        <dbReference type="Rhea" id="RHEA:29667"/>
        <dbReference type="ChEBI" id="CHEBI:15377"/>
    </reaction>
</comment>
<comment type="subcellular location">
    <subcellularLocation>
        <location evidence="1">Membrane</location>
        <topology evidence="1">Multi-pass membrane protein</topology>
    </subcellularLocation>
</comment>
<comment type="induction">
    <text evidence="2">Expression is highest at 15 degrees Celsius and decreases at any other temperature.</text>
</comment>
<comment type="domain">
    <text evidence="5">Aquaporins contain two tandem repeats each containing three membrane-spanning domains and a pore-forming loop with the signature motif Asn-Pro-Ala (NPA).</text>
</comment>
<comment type="similarity">
    <text evidence="4">Belongs to the MIP/aquaporin (TC 1.A.8) family.</text>
</comment>